<comment type="function">
    <text evidence="1">Involved in the biosynthesis of the central metabolite phospho-alpha-D-ribosyl-1-pyrophosphate (PRPP) via the transfer of pyrophosphoryl group from ATP to 1-hydroxyl of ribose-5-phosphate (Rib-5-P).</text>
</comment>
<comment type="catalytic activity">
    <reaction evidence="1">
        <text>D-ribose 5-phosphate + ATP = 5-phospho-alpha-D-ribose 1-diphosphate + AMP + H(+)</text>
        <dbReference type="Rhea" id="RHEA:15609"/>
        <dbReference type="ChEBI" id="CHEBI:15378"/>
        <dbReference type="ChEBI" id="CHEBI:30616"/>
        <dbReference type="ChEBI" id="CHEBI:58017"/>
        <dbReference type="ChEBI" id="CHEBI:78346"/>
        <dbReference type="ChEBI" id="CHEBI:456215"/>
        <dbReference type="EC" id="2.7.6.1"/>
    </reaction>
</comment>
<comment type="cofactor">
    <cofactor evidence="1">
        <name>Mg(2+)</name>
        <dbReference type="ChEBI" id="CHEBI:18420"/>
    </cofactor>
    <text evidence="1">Binds 2 Mg(2+) ions per subunit.</text>
</comment>
<comment type="pathway">
    <text evidence="1">Metabolic intermediate biosynthesis; 5-phospho-alpha-D-ribose 1-diphosphate biosynthesis; 5-phospho-alpha-D-ribose 1-diphosphate from D-ribose 5-phosphate (route I): step 1/1.</text>
</comment>
<comment type="subunit">
    <text evidence="1">Homohexamer.</text>
</comment>
<comment type="subcellular location">
    <subcellularLocation>
        <location evidence="1">Cytoplasm</location>
    </subcellularLocation>
</comment>
<comment type="similarity">
    <text evidence="1">Belongs to the ribose-phosphate pyrophosphokinase family. Class I subfamily.</text>
</comment>
<comment type="caution">
    <text evidence="1">Part of a set of proteins in which some residues (ACT_SITE, NP_BIND, REGION and BINDING) are not conserved.</text>
</comment>
<proteinExistence type="inferred from homology"/>
<dbReference type="EC" id="2.7.6.1" evidence="1"/>
<dbReference type="EMBL" id="AL935263">
    <property type="protein sequence ID" value="CCC79391.1"/>
    <property type="molecule type" value="Genomic_DNA"/>
</dbReference>
<dbReference type="RefSeq" id="WP_003644596.1">
    <property type="nucleotide sequence ID" value="NC_004567.2"/>
</dbReference>
<dbReference type="RefSeq" id="YP_004889905.1">
    <property type="nucleotide sequence ID" value="NC_004567.2"/>
</dbReference>
<dbReference type="SMR" id="Q88VA5"/>
<dbReference type="STRING" id="220668.lp_2166"/>
<dbReference type="EnsemblBacteria" id="CCC79391">
    <property type="protein sequence ID" value="CCC79391"/>
    <property type="gene ID" value="lp_2166"/>
</dbReference>
<dbReference type="KEGG" id="lpl:lp_2166"/>
<dbReference type="PATRIC" id="fig|220668.9.peg.1832"/>
<dbReference type="eggNOG" id="COG0462">
    <property type="taxonomic scope" value="Bacteria"/>
</dbReference>
<dbReference type="HOGENOM" id="CLU_033546_1_0_9"/>
<dbReference type="OrthoDB" id="9777067at2"/>
<dbReference type="PhylomeDB" id="Q88VA5"/>
<dbReference type="UniPathway" id="UPA00087">
    <property type="reaction ID" value="UER00172"/>
</dbReference>
<dbReference type="Proteomes" id="UP000000432">
    <property type="component" value="Chromosome"/>
</dbReference>
<dbReference type="GO" id="GO:0005737">
    <property type="term" value="C:cytoplasm"/>
    <property type="evidence" value="ECO:0007669"/>
    <property type="project" value="UniProtKB-SubCell"/>
</dbReference>
<dbReference type="GO" id="GO:0002189">
    <property type="term" value="C:ribose phosphate diphosphokinase complex"/>
    <property type="evidence" value="ECO:0007669"/>
    <property type="project" value="TreeGrafter"/>
</dbReference>
<dbReference type="GO" id="GO:0005524">
    <property type="term" value="F:ATP binding"/>
    <property type="evidence" value="ECO:0007669"/>
    <property type="project" value="UniProtKB-KW"/>
</dbReference>
<dbReference type="GO" id="GO:0016301">
    <property type="term" value="F:kinase activity"/>
    <property type="evidence" value="ECO:0007669"/>
    <property type="project" value="UniProtKB-KW"/>
</dbReference>
<dbReference type="GO" id="GO:0000287">
    <property type="term" value="F:magnesium ion binding"/>
    <property type="evidence" value="ECO:0007669"/>
    <property type="project" value="UniProtKB-UniRule"/>
</dbReference>
<dbReference type="GO" id="GO:0004749">
    <property type="term" value="F:ribose phosphate diphosphokinase activity"/>
    <property type="evidence" value="ECO:0007669"/>
    <property type="project" value="UniProtKB-UniRule"/>
</dbReference>
<dbReference type="GO" id="GO:0006015">
    <property type="term" value="P:5-phosphoribose 1-diphosphate biosynthetic process"/>
    <property type="evidence" value="ECO:0007669"/>
    <property type="project" value="UniProtKB-UniRule"/>
</dbReference>
<dbReference type="GO" id="GO:0006164">
    <property type="term" value="P:purine nucleotide biosynthetic process"/>
    <property type="evidence" value="ECO:0007669"/>
    <property type="project" value="TreeGrafter"/>
</dbReference>
<dbReference type="GO" id="GO:0009156">
    <property type="term" value="P:ribonucleoside monophosphate biosynthetic process"/>
    <property type="evidence" value="ECO:0007669"/>
    <property type="project" value="InterPro"/>
</dbReference>
<dbReference type="CDD" id="cd06223">
    <property type="entry name" value="PRTases_typeI"/>
    <property type="match status" value="1"/>
</dbReference>
<dbReference type="FunFam" id="3.40.50.2020:FF:000002">
    <property type="entry name" value="Ribose-phosphate pyrophosphokinase"/>
    <property type="match status" value="1"/>
</dbReference>
<dbReference type="FunFam" id="3.40.50.2020:FF:000014">
    <property type="entry name" value="Ribose-phosphate pyrophosphokinase 1"/>
    <property type="match status" value="1"/>
</dbReference>
<dbReference type="Gene3D" id="3.40.50.2020">
    <property type="match status" value="2"/>
</dbReference>
<dbReference type="HAMAP" id="MF_00583_B">
    <property type="entry name" value="RibP_PPkinase_B"/>
    <property type="match status" value="1"/>
</dbReference>
<dbReference type="InterPro" id="IPR000842">
    <property type="entry name" value="PRib_PP_synth_CS"/>
</dbReference>
<dbReference type="InterPro" id="IPR029099">
    <property type="entry name" value="Pribosyltran_N"/>
</dbReference>
<dbReference type="InterPro" id="IPR000836">
    <property type="entry name" value="PRibTrfase_dom"/>
</dbReference>
<dbReference type="InterPro" id="IPR029057">
    <property type="entry name" value="PRTase-like"/>
</dbReference>
<dbReference type="InterPro" id="IPR005946">
    <property type="entry name" value="Rib-P_diPkinase"/>
</dbReference>
<dbReference type="InterPro" id="IPR037515">
    <property type="entry name" value="Rib-P_diPkinase_bac"/>
</dbReference>
<dbReference type="NCBIfam" id="NF002320">
    <property type="entry name" value="PRK01259.1"/>
    <property type="match status" value="1"/>
</dbReference>
<dbReference type="NCBIfam" id="NF002618">
    <property type="entry name" value="PRK02269.1"/>
    <property type="match status" value="1"/>
</dbReference>
<dbReference type="NCBIfam" id="TIGR01251">
    <property type="entry name" value="ribP_PPkin"/>
    <property type="match status" value="1"/>
</dbReference>
<dbReference type="PANTHER" id="PTHR10210">
    <property type="entry name" value="RIBOSE-PHOSPHATE DIPHOSPHOKINASE FAMILY MEMBER"/>
    <property type="match status" value="1"/>
</dbReference>
<dbReference type="PANTHER" id="PTHR10210:SF41">
    <property type="entry name" value="RIBOSE-PHOSPHATE PYROPHOSPHOKINASE 1, CHLOROPLASTIC"/>
    <property type="match status" value="1"/>
</dbReference>
<dbReference type="Pfam" id="PF14572">
    <property type="entry name" value="Pribosyl_synth"/>
    <property type="match status" value="1"/>
</dbReference>
<dbReference type="Pfam" id="PF13793">
    <property type="entry name" value="Pribosyltran_N"/>
    <property type="match status" value="1"/>
</dbReference>
<dbReference type="SMART" id="SM01400">
    <property type="entry name" value="Pribosyltran_N"/>
    <property type="match status" value="1"/>
</dbReference>
<dbReference type="SUPFAM" id="SSF53271">
    <property type="entry name" value="PRTase-like"/>
    <property type="match status" value="2"/>
</dbReference>
<dbReference type="PROSITE" id="PS00114">
    <property type="entry name" value="PRPP_SYNTHASE"/>
    <property type="match status" value="1"/>
</dbReference>
<name>KPRS2_LACPL</name>
<feature type="chain" id="PRO_0000141149" description="Putative ribose-phosphate pyrophosphokinase 2">
    <location>
        <begin position="1"/>
        <end position="321"/>
    </location>
</feature>
<feature type="binding site" evidence="1">
    <location>
        <begin position="43"/>
        <end position="45"/>
    </location>
    <ligand>
        <name>ATP</name>
        <dbReference type="ChEBI" id="CHEBI:30616"/>
    </ligand>
</feature>
<feature type="binding site" evidence="1">
    <location>
        <begin position="102"/>
        <end position="103"/>
    </location>
    <ligand>
        <name>ATP</name>
        <dbReference type="ChEBI" id="CHEBI:30616"/>
    </ligand>
</feature>
<feature type="binding site" evidence="1">
    <location>
        <position position="136"/>
    </location>
    <ligand>
        <name>Mg(2+)</name>
        <dbReference type="ChEBI" id="CHEBI:18420"/>
        <label>1</label>
    </ligand>
</feature>
<feature type="binding site" evidence="1">
    <location>
        <position position="176"/>
    </location>
    <ligand>
        <name>Mg(2+)</name>
        <dbReference type="ChEBI" id="CHEBI:18420"/>
        <label>2</label>
    </ligand>
</feature>
<feature type="binding site" evidence="1">
    <location>
        <position position="225"/>
    </location>
    <ligand>
        <name>D-ribose 5-phosphate</name>
        <dbReference type="ChEBI" id="CHEBI:78346"/>
    </ligand>
</feature>
<accession>Q88VA5</accession>
<accession>F9UQA2</accession>
<gene>
    <name evidence="1" type="primary">prs2</name>
    <name type="ordered locus">lp_2166</name>
</gene>
<protein>
    <recommendedName>
        <fullName evidence="1">Putative ribose-phosphate pyrophosphokinase 2</fullName>
        <shortName evidence="1">RPPK 2</shortName>
        <ecNumber evidence="1">2.7.6.1</ecNumber>
    </recommendedName>
    <alternativeName>
        <fullName evidence="1">5-phospho-D-ribosyl alpha-1-diphosphate synthase 2</fullName>
    </alternativeName>
    <alternativeName>
        <fullName evidence="1">Phosphoribosyl diphosphate synthase 2</fullName>
    </alternativeName>
    <alternativeName>
        <fullName evidence="1">Phosphoribosyl pyrophosphate synthase 2</fullName>
        <shortName evidence="1">P-Rib-PP synthase 2</shortName>
        <shortName evidence="1">PRPP synthase 2</shortName>
        <shortName evidence="1">PRPPase 2</shortName>
    </alternativeName>
</protein>
<organism>
    <name type="scientific">Lactiplantibacillus plantarum (strain ATCC BAA-793 / NCIMB 8826 / WCFS1)</name>
    <name type="common">Lactobacillus plantarum</name>
    <dbReference type="NCBI Taxonomy" id="220668"/>
    <lineage>
        <taxon>Bacteria</taxon>
        <taxon>Bacillati</taxon>
        <taxon>Bacillota</taxon>
        <taxon>Bacilli</taxon>
        <taxon>Lactobacillales</taxon>
        <taxon>Lactobacillaceae</taxon>
        <taxon>Lactiplantibacillus</taxon>
    </lineage>
</organism>
<evidence type="ECO:0000255" key="1">
    <source>
        <dbReference type="HAMAP-Rule" id="MF_00583"/>
    </source>
</evidence>
<keyword id="KW-0067">ATP-binding</keyword>
<keyword id="KW-0963">Cytoplasm</keyword>
<keyword id="KW-0418">Kinase</keyword>
<keyword id="KW-0460">Magnesium</keyword>
<keyword id="KW-0479">Metal-binding</keyword>
<keyword id="KW-0545">Nucleotide biosynthesis</keyword>
<keyword id="KW-0547">Nucleotide-binding</keyword>
<keyword id="KW-1185">Reference proteome</keyword>
<keyword id="KW-0808">Transferase</keyword>
<reference key="1">
    <citation type="journal article" date="2003" name="Proc. Natl. Acad. Sci. U.S.A.">
        <title>Complete genome sequence of Lactobacillus plantarum WCFS1.</title>
        <authorList>
            <person name="Kleerebezem M."/>
            <person name="Boekhorst J."/>
            <person name="van Kranenburg R."/>
            <person name="Molenaar D."/>
            <person name="Kuipers O.P."/>
            <person name="Leer R."/>
            <person name="Tarchini R."/>
            <person name="Peters S.A."/>
            <person name="Sandbrink H.M."/>
            <person name="Fiers M.W.E.J."/>
            <person name="Stiekema W."/>
            <person name="Klein Lankhorst R.M."/>
            <person name="Bron P.A."/>
            <person name="Hoffer S.M."/>
            <person name="Nierop Groot M.N."/>
            <person name="Kerkhoven R."/>
            <person name="De Vries M."/>
            <person name="Ursing B."/>
            <person name="De Vos W.M."/>
            <person name="Siezen R.J."/>
        </authorList>
    </citation>
    <scope>NUCLEOTIDE SEQUENCE [LARGE SCALE GENOMIC DNA]</scope>
    <source>
        <strain>ATCC BAA-793 / NCIMB 8826 / WCFS1</strain>
    </source>
</reference>
<reference key="2">
    <citation type="journal article" date="2012" name="J. Bacteriol.">
        <title>Complete resequencing and reannotation of the Lactobacillus plantarum WCFS1 genome.</title>
        <authorList>
            <person name="Siezen R.J."/>
            <person name="Francke C."/>
            <person name="Renckens B."/>
            <person name="Boekhorst J."/>
            <person name="Wels M."/>
            <person name="Kleerebezem M."/>
            <person name="van Hijum S.A."/>
        </authorList>
    </citation>
    <scope>NUCLEOTIDE SEQUENCE [LARGE SCALE GENOMIC DNA]</scope>
    <scope>GENOME REANNOTATION</scope>
    <source>
        <strain>ATCC BAA-793 / NCIMB 8826 / WCFS1</strain>
    </source>
</reference>
<sequence length="321" mass="35057">MSTDQSYAKLKLFALNSNLPLAEKIAQRVGIPLGKSSVKRFSDGEIQINIEESIRGAEVFVIQSISEPVNDTILELLIMIDALRRASASQINVVIPYYGYSRQDRKARSREPITAKLIATLLEKDRASRVLTVDLHAAQIQGFFDIPVDHLFAAPLLASYFKDRGITDNLVVVSPDHAGVSRARKMAELLGAPIAIIDNRHPDDDDLVPSSIIGDVKGRVAIVIDDMIDTGTRFDVSADALAQAGAATVYGCATHAIFSQDAVAKLQASKFEKVIVTDTIQIPADKHFDKLVQLSVGPLLGDAIKLVHEQQPVDRLFDPRI</sequence>